<gene>
    <name evidence="1" type="primary">kup</name>
    <name type="ordered locus">XCV3279</name>
</gene>
<organism>
    <name type="scientific">Xanthomonas euvesicatoria pv. vesicatoria (strain 85-10)</name>
    <name type="common">Xanthomonas campestris pv. vesicatoria</name>
    <dbReference type="NCBI Taxonomy" id="316273"/>
    <lineage>
        <taxon>Bacteria</taxon>
        <taxon>Pseudomonadati</taxon>
        <taxon>Pseudomonadota</taxon>
        <taxon>Gammaproteobacteria</taxon>
        <taxon>Lysobacterales</taxon>
        <taxon>Lysobacteraceae</taxon>
        <taxon>Xanthomonas</taxon>
    </lineage>
</organism>
<sequence length="634" mass="68980">MSHTPKSAGSSHAPANSQTALVIGAIGVVFGDIGTSPLYTLKEAFSPHYGLTPDHDTVLGILSLVFWALMLVVTLKYVTVIMRADNDGEGGIMALTALAQRTLPGGSRSMYVVGILGIFGASLFFGDGVITPAISVLSAVEGLEVAAPRLEPFVVPITLVVLGMLFLAQRFGTERVGKAFGPITLLWFFALGAIGVYNMARAPEVLHALNPWWGVRFFAQHNWHAVFVLGAVVLAVTGGEALYADMGHFGAKAIRRSWQFVVLPMLTLTYLGQGALMLRNPAAVSNPFYEAVPEWALYPMIVLATAATVIASQALITGAYSVASQAMQLGYIPRMHIRHTSHSTIGQIYVPAVNWCLLALVAVAVIGFGDSASLATAYGVSVTGTMLITTVLMIIYARANPRVPAPLLWLFALVFLAVDCAFFYANIIKFLDGAWFPLLLGLILFTLMRTWRRGRKLLHDEIRKDGIKLDTFLPGLMLAPPVRVPGTAVFLTADPMVVPHALMHNLKHNKVLHERNVFLTVETLQVPYAAAGKRLKIDAIGDEFYRVHVRFGFMETPDVPLALMRSCDQGGIYFDPMDTTYFASRETIVASANRGMPIWRDKLFALMHRNAAPATGFFRIPGNRLVELGAQVEI</sequence>
<proteinExistence type="inferred from homology"/>
<evidence type="ECO:0000255" key="1">
    <source>
        <dbReference type="HAMAP-Rule" id="MF_01522"/>
    </source>
</evidence>
<keyword id="KW-0997">Cell inner membrane</keyword>
<keyword id="KW-1003">Cell membrane</keyword>
<keyword id="KW-0406">Ion transport</keyword>
<keyword id="KW-0472">Membrane</keyword>
<keyword id="KW-0630">Potassium</keyword>
<keyword id="KW-0633">Potassium transport</keyword>
<keyword id="KW-0769">Symport</keyword>
<keyword id="KW-0812">Transmembrane</keyword>
<keyword id="KW-1133">Transmembrane helix</keyword>
<keyword id="KW-0813">Transport</keyword>
<accession>Q3BQF3</accession>
<feature type="chain" id="PRO_0000279843" description="Probable potassium transport system protein Kup">
    <location>
        <begin position="1"/>
        <end position="634"/>
    </location>
</feature>
<feature type="transmembrane region" description="Helical" evidence="1">
    <location>
        <begin position="21"/>
        <end position="41"/>
    </location>
</feature>
<feature type="transmembrane region" description="Helical" evidence="1">
    <location>
        <begin position="58"/>
        <end position="78"/>
    </location>
</feature>
<feature type="transmembrane region" description="Helical" evidence="1">
    <location>
        <begin position="110"/>
        <end position="130"/>
    </location>
</feature>
<feature type="transmembrane region" description="Helical" evidence="1">
    <location>
        <begin position="152"/>
        <end position="172"/>
    </location>
</feature>
<feature type="transmembrane region" description="Helical" evidence="1">
    <location>
        <begin position="179"/>
        <end position="199"/>
    </location>
</feature>
<feature type="transmembrane region" description="Helical" evidence="1">
    <location>
        <begin position="223"/>
        <end position="243"/>
    </location>
</feature>
<feature type="transmembrane region" description="Helical" evidence="1">
    <location>
        <begin position="258"/>
        <end position="278"/>
    </location>
</feature>
<feature type="transmembrane region" description="Helical" evidence="1">
    <location>
        <begin position="296"/>
        <end position="316"/>
    </location>
</feature>
<feature type="transmembrane region" description="Helical" evidence="1">
    <location>
        <begin position="348"/>
        <end position="368"/>
    </location>
</feature>
<feature type="transmembrane region" description="Helical" evidence="1">
    <location>
        <begin position="377"/>
        <end position="397"/>
    </location>
</feature>
<feature type="transmembrane region" description="Helical" evidence="1">
    <location>
        <begin position="403"/>
        <end position="423"/>
    </location>
</feature>
<feature type="transmembrane region" description="Helical" evidence="1">
    <location>
        <begin position="427"/>
        <end position="447"/>
    </location>
</feature>
<protein>
    <recommendedName>
        <fullName evidence="1">Probable potassium transport system protein Kup</fullName>
    </recommendedName>
</protein>
<name>KUP_XANE5</name>
<dbReference type="EMBL" id="AM039952">
    <property type="protein sequence ID" value="CAJ25010.1"/>
    <property type="molecule type" value="Genomic_DNA"/>
</dbReference>
<dbReference type="RefSeq" id="WP_008578069.1">
    <property type="nucleotide sequence ID" value="NZ_CP017190.1"/>
</dbReference>
<dbReference type="STRING" id="456327.BJD11_06370"/>
<dbReference type="KEGG" id="xcv:XCV3279"/>
<dbReference type="eggNOG" id="COG3158">
    <property type="taxonomic scope" value="Bacteria"/>
</dbReference>
<dbReference type="HOGENOM" id="CLU_008142_4_2_6"/>
<dbReference type="Proteomes" id="UP000007069">
    <property type="component" value="Chromosome"/>
</dbReference>
<dbReference type="GO" id="GO:0005886">
    <property type="term" value="C:plasma membrane"/>
    <property type="evidence" value="ECO:0007669"/>
    <property type="project" value="UniProtKB-SubCell"/>
</dbReference>
<dbReference type="GO" id="GO:0015079">
    <property type="term" value="F:potassium ion transmembrane transporter activity"/>
    <property type="evidence" value="ECO:0007669"/>
    <property type="project" value="UniProtKB-UniRule"/>
</dbReference>
<dbReference type="GO" id="GO:0015293">
    <property type="term" value="F:symporter activity"/>
    <property type="evidence" value="ECO:0007669"/>
    <property type="project" value="UniProtKB-UniRule"/>
</dbReference>
<dbReference type="HAMAP" id="MF_01522">
    <property type="entry name" value="Kup"/>
    <property type="match status" value="1"/>
</dbReference>
<dbReference type="InterPro" id="IPR003855">
    <property type="entry name" value="K+_transporter"/>
</dbReference>
<dbReference type="InterPro" id="IPR053952">
    <property type="entry name" value="K_trans_C"/>
</dbReference>
<dbReference type="InterPro" id="IPR053951">
    <property type="entry name" value="K_trans_N"/>
</dbReference>
<dbReference type="InterPro" id="IPR023051">
    <property type="entry name" value="Kup"/>
</dbReference>
<dbReference type="PANTHER" id="PTHR30540:SF79">
    <property type="entry name" value="LOW AFFINITY POTASSIUM TRANSPORT SYSTEM PROTEIN KUP"/>
    <property type="match status" value="1"/>
</dbReference>
<dbReference type="PANTHER" id="PTHR30540">
    <property type="entry name" value="OSMOTIC STRESS POTASSIUM TRANSPORTER"/>
    <property type="match status" value="1"/>
</dbReference>
<dbReference type="Pfam" id="PF02705">
    <property type="entry name" value="K_trans"/>
    <property type="match status" value="1"/>
</dbReference>
<dbReference type="Pfam" id="PF22776">
    <property type="entry name" value="K_trans_C"/>
    <property type="match status" value="1"/>
</dbReference>
<reference key="1">
    <citation type="journal article" date="2005" name="J. Bacteriol.">
        <title>Insights into genome plasticity and pathogenicity of the plant pathogenic Bacterium Xanthomonas campestris pv. vesicatoria revealed by the complete genome sequence.</title>
        <authorList>
            <person name="Thieme F."/>
            <person name="Koebnik R."/>
            <person name="Bekel T."/>
            <person name="Berger C."/>
            <person name="Boch J."/>
            <person name="Buettner D."/>
            <person name="Caldana C."/>
            <person name="Gaigalat L."/>
            <person name="Goesmann A."/>
            <person name="Kay S."/>
            <person name="Kirchner O."/>
            <person name="Lanz C."/>
            <person name="Linke B."/>
            <person name="McHardy A.C."/>
            <person name="Meyer F."/>
            <person name="Mittenhuber G."/>
            <person name="Nies D.H."/>
            <person name="Niesbach-Kloesgen U."/>
            <person name="Patschkowski T."/>
            <person name="Rueckert C."/>
            <person name="Rupp O."/>
            <person name="Schneiker S."/>
            <person name="Schuster S.C."/>
            <person name="Vorhoelter F.J."/>
            <person name="Weber E."/>
            <person name="Puehler A."/>
            <person name="Bonas U."/>
            <person name="Bartels D."/>
            <person name="Kaiser O."/>
        </authorList>
    </citation>
    <scope>NUCLEOTIDE SEQUENCE [LARGE SCALE GENOMIC DNA]</scope>
    <source>
        <strain>85-10</strain>
    </source>
</reference>
<comment type="function">
    <text evidence="1">Transport of potassium into the cell. Likely operates as a K(+):H(+) symporter.</text>
</comment>
<comment type="catalytic activity">
    <reaction evidence="1">
        <text>K(+)(in) + H(+)(in) = K(+)(out) + H(+)(out)</text>
        <dbReference type="Rhea" id="RHEA:28490"/>
        <dbReference type="ChEBI" id="CHEBI:15378"/>
        <dbReference type="ChEBI" id="CHEBI:29103"/>
    </reaction>
    <physiologicalReaction direction="right-to-left" evidence="1">
        <dbReference type="Rhea" id="RHEA:28492"/>
    </physiologicalReaction>
</comment>
<comment type="subcellular location">
    <subcellularLocation>
        <location evidence="1">Cell inner membrane</location>
        <topology evidence="1">Multi-pass membrane protein</topology>
    </subcellularLocation>
</comment>
<comment type="similarity">
    <text evidence="1">Belongs to the HAK/KUP transporter (TC 2.A.72) family.</text>
</comment>